<protein>
    <recommendedName>
        <fullName>Uncharacterized protein MG074</fullName>
    </recommendedName>
</protein>
<organism>
    <name type="scientific">Mycoplasma genitalium (strain ATCC 33530 / DSM 19775 / NCTC 10195 / G37)</name>
    <name type="common">Mycoplasmoides genitalium</name>
    <dbReference type="NCBI Taxonomy" id="243273"/>
    <lineage>
        <taxon>Bacteria</taxon>
        <taxon>Bacillati</taxon>
        <taxon>Mycoplasmatota</taxon>
        <taxon>Mycoplasmoidales</taxon>
        <taxon>Mycoplasmoidaceae</taxon>
        <taxon>Mycoplasmoides</taxon>
    </lineage>
</organism>
<feature type="chain" id="PRO_0000210409" description="Uncharacterized protein MG074">
    <location>
        <begin position="1"/>
        <end position="137"/>
    </location>
</feature>
<keyword id="KW-1185">Reference proteome</keyword>
<reference key="1">
    <citation type="journal article" date="1995" name="Science">
        <title>The minimal gene complement of Mycoplasma genitalium.</title>
        <authorList>
            <person name="Fraser C.M."/>
            <person name="Gocayne J.D."/>
            <person name="White O."/>
            <person name="Adams M.D."/>
            <person name="Clayton R.A."/>
            <person name="Fleischmann R.D."/>
            <person name="Bult C.J."/>
            <person name="Kerlavage A.R."/>
            <person name="Sutton G.G."/>
            <person name="Kelley J.M."/>
            <person name="Fritchman J.L."/>
            <person name="Weidman J.F."/>
            <person name="Small K.V."/>
            <person name="Sandusky M."/>
            <person name="Fuhrmann J.L."/>
            <person name="Nguyen D.T."/>
            <person name="Utterback T.R."/>
            <person name="Saudek D.M."/>
            <person name="Phillips C.A."/>
            <person name="Merrick J.M."/>
            <person name="Tomb J.-F."/>
            <person name="Dougherty B.A."/>
            <person name="Bott K.F."/>
            <person name="Hu P.-C."/>
            <person name="Lucier T.S."/>
            <person name="Peterson S.N."/>
            <person name="Smith H.O."/>
            <person name="Hutchison C.A. III"/>
            <person name="Venter J.C."/>
        </authorList>
    </citation>
    <scope>NUCLEOTIDE SEQUENCE [LARGE SCALE GENOMIC DNA]</scope>
    <source>
        <strain>ATCC 33530 / DSM 19775 / NCTC 10195 / G37</strain>
    </source>
</reference>
<gene>
    <name type="ordered locus">MG074</name>
</gene>
<accession>P47320</accession>
<sequence>MRQFIKLSLLVFVLLFLSELICRFSLRLVNSIKARYKSSVFSYTACLLFLKSFQNFSNAFQKLANWVFWFENDVNELLSIFYFNFDQKSEKVDYNFFNGYKVTAQKVVEKEQLLTCKLSDYYRLFRDKTFWFELINN</sequence>
<dbReference type="EMBL" id="L43967">
    <property type="protein sequence ID" value="AAC71292.1"/>
    <property type="molecule type" value="Genomic_DNA"/>
</dbReference>
<dbReference type="PIR" id="B64208">
    <property type="entry name" value="B64208"/>
</dbReference>
<dbReference type="RefSeq" id="WP_010869319.1">
    <property type="nucleotide sequence ID" value="NC_000908.2"/>
</dbReference>
<dbReference type="SMR" id="P47320"/>
<dbReference type="STRING" id="243273.MG_074"/>
<dbReference type="GeneID" id="88282197"/>
<dbReference type="KEGG" id="mge:MG_074"/>
<dbReference type="eggNOG" id="ENOG5030NKT">
    <property type="taxonomic scope" value="Bacteria"/>
</dbReference>
<dbReference type="HOGENOM" id="CLU_1862952_0_0_14"/>
<dbReference type="InParanoid" id="P47320"/>
<dbReference type="OrthoDB" id="9999175at2"/>
<dbReference type="BioCyc" id="MGEN243273:G1GJ2-86-MONOMER"/>
<dbReference type="Proteomes" id="UP000000807">
    <property type="component" value="Chromosome"/>
</dbReference>
<dbReference type="InterPro" id="IPR035339">
    <property type="entry name" value="DUF5426"/>
</dbReference>
<dbReference type="Pfam" id="PF17473">
    <property type="entry name" value="DUF5426"/>
    <property type="match status" value="1"/>
</dbReference>
<name>Y074_MYCGE</name>
<proteinExistence type="predicted"/>